<reference key="1">
    <citation type="journal article" date="2004" name="Proc. Natl. Acad. Sci. U.S.A.">
        <title>Genomic plasticity of the causative agent of melioidosis, Burkholderia pseudomallei.</title>
        <authorList>
            <person name="Holden M.T.G."/>
            <person name="Titball R.W."/>
            <person name="Peacock S.J."/>
            <person name="Cerdeno-Tarraga A.-M."/>
            <person name="Atkins T."/>
            <person name="Crossman L.C."/>
            <person name="Pitt T."/>
            <person name="Churcher C."/>
            <person name="Mungall K.L."/>
            <person name="Bentley S.D."/>
            <person name="Sebaihia M."/>
            <person name="Thomson N.R."/>
            <person name="Bason N."/>
            <person name="Beacham I.R."/>
            <person name="Brooks K."/>
            <person name="Brown K.A."/>
            <person name="Brown N.F."/>
            <person name="Challis G.L."/>
            <person name="Cherevach I."/>
            <person name="Chillingworth T."/>
            <person name="Cronin A."/>
            <person name="Crossett B."/>
            <person name="Davis P."/>
            <person name="DeShazer D."/>
            <person name="Feltwell T."/>
            <person name="Fraser A."/>
            <person name="Hance Z."/>
            <person name="Hauser H."/>
            <person name="Holroyd S."/>
            <person name="Jagels K."/>
            <person name="Keith K.E."/>
            <person name="Maddison M."/>
            <person name="Moule S."/>
            <person name="Price C."/>
            <person name="Quail M.A."/>
            <person name="Rabbinowitsch E."/>
            <person name="Rutherford K."/>
            <person name="Sanders M."/>
            <person name="Simmonds M."/>
            <person name="Songsivilai S."/>
            <person name="Stevens K."/>
            <person name="Tumapa S."/>
            <person name="Vesaratchavest M."/>
            <person name="Whitehead S."/>
            <person name="Yeats C."/>
            <person name="Barrell B.G."/>
            <person name="Oyston P.C.F."/>
            <person name="Parkhill J."/>
        </authorList>
    </citation>
    <scope>NUCLEOTIDE SEQUENCE [LARGE SCALE GENOMIC DNA]</scope>
    <source>
        <strain>K96243</strain>
    </source>
</reference>
<name>LEU1_BURPS</name>
<organism>
    <name type="scientific">Burkholderia pseudomallei (strain K96243)</name>
    <dbReference type="NCBI Taxonomy" id="272560"/>
    <lineage>
        <taxon>Bacteria</taxon>
        <taxon>Pseudomonadati</taxon>
        <taxon>Pseudomonadota</taxon>
        <taxon>Betaproteobacteria</taxon>
        <taxon>Burkholderiales</taxon>
        <taxon>Burkholderiaceae</taxon>
        <taxon>Burkholderia</taxon>
        <taxon>pseudomallei group</taxon>
    </lineage>
</organism>
<evidence type="ECO:0000255" key="1">
    <source>
        <dbReference type="HAMAP-Rule" id="MF_01025"/>
    </source>
</evidence>
<protein>
    <recommendedName>
        <fullName evidence="1">2-isopropylmalate synthase</fullName>
        <ecNumber evidence="1">2.3.3.13</ecNumber>
    </recommendedName>
    <alternativeName>
        <fullName evidence="1">Alpha-IPM synthase</fullName>
    </alternativeName>
    <alternativeName>
        <fullName evidence="1">Alpha-isopropylmalate synthase</fullName>
    </alternativeName>
</protein>
<feature type="chain" id="PRO_1000149155" description="2-isopropylmalate synthase">
    <location>
        <begin position="1"/>
        <end position="515"/>
    </location>
</feature>
<feature type="domain" description="Pyruvate carboxyltransferase" evidence="1">
    <location>
        <begin position="5"/>
        <end position="268"/>
    </location>
</feature>
<feature type="region of interest" description="Regulatory domain" evidence="1">
    <location>
        <begin position="396"/>
        <end position="515"/>
    </location>
</feature>
<feature type="binding site" evidence="1">
    <location>
        <position position="14"/>
    </location>
    <ligand>
        <name>Mn(2+)</name>
        <dbReference type="ChEBI" id="CHEBI:29035"/>
    </ligand>
</feature>
<feature type="binding site" evidence="1">
    <location>
        <position position="202"/>
    </location>
    <ligand>
        <name>Mn(2+)</name>
        <dbReference type="ChEBI" id="CHEBI:29035"/>
    </ligand>
</feature>
<feature type="binding site" evidence="1">
    <location>
        <position position="204"/>
    </location>
    <ligand>
        <name>Mn(2+)</name>
        <dbReference type="ChEBI" id="CHEBI:29035"/>
    </ligand>
</feature>
<feature type="binding site" evidence="1">
    <location>
        <position position="239"/>
    </location>
    <ligand>
        <name>Mn(2+)</name>
        <dbReference type="ChEBI" id="CHEBI:29035"/>
    </ligand>
</feature>
<dbReference type="EC" id="2.3.3.13" evidence="1"/>
<dbReference type="EMBL" id="BX571965">
    <property type="protein sequence ID" value="CAH35196.1"/>
    <property type="molecule type" value="Genomic_DNA"/>
</dbReference>
<dbReference type="RefSeq" id="WP_004522419.1">
    <property type="nucleotide sequence ID" value="NZ_CP009538.1"/>
</dbReference>
<dbReference type="RefSeq" id="YP_107823.1">
    <property type="nucleotide sequence ID" value="NC_006350.1"/>
</dbReference>
<dbReference type="SMR" id="Q63VP3"/>
<dbReference type="STRING" id="272560.BPSL1201"/>
<dbReference type="KEGG" id="bps:BPSL1201"/>
<dbReference type="PATRIC" id="fig|272560.51.peg.326"/>
<dbReference type="eggNOG" id="COG0119">
    <property type="taxonomic scope" value="Bacteria"/>
</dbReference>
<dbReference type="UniPathway" id="UPA00048">
    <property type="reaction ID" value="UER00070"/>
</dbReference>
<dbReference type="Proteomes" id="UP000000605">
    <property type="component" value="Chromosome 1"/>
</dbReference>
<dbReference type="GO" id="GO:0005829">
    <property type="term" value="C:cytosol"/>
    <property type="evidence" value="ECO:0007669"/>
    <property type="project" value="TreeGrafter"/>
</dbReference>
<dbReference type="GO" id="GO:0003852">
    <property type="term" value="F:2-isopropylmalate synthase activity"/>
    <property type="evidence" value="ECO:0007669"/>
    <property type="project" value="UniProtKB-UniRule"/>
</dbReference>
<dbReference type="GO" id="GO:0003985">
    <property type="term" value="F:acetyl-CoA C-acetyltransferase activity"/>
    <property type="evidence" value="ECO:0007669"/>
    <property type="project" value="UniProtKB-UniRule"/>
</dbReference>
<dbReference type="GO" id="GO:0030145">
    <property type="term" value="F:manganese ion binding"/>
    <property type="evidence" value="ECO:0007669"/>
    <property type="project" value="UniProtKB-UniRule"/>
</dbReference>
<dbReference type="GO" id="GO:0009098">
    <property type="term" value="P:L-leucine biosynthetic process"/>
    <property type="evidence" value="ECO:0007669"/>
    <property type="project" value="UniProtKB-UniRule"/>
</dbReference>
<dbReference type="CDD" id="cd07940">
    <property type="entry name" value="DRE_TIM_IPMS"/>
    <property type="match status" value="1"/>
</dbReference>
<dbReference type="FunFam" id="1.10.238.260:FF:000001">
    <property type="entry name" value="2-isopropylmalate synthase"/>
    <property type="match status" value="1"/>
</dbReference>
<dbReference type="FunFam" id="3.20.20.70:FF:000010">
    <property type="entry name" value="2-isopropylmalate synthase"/>
    <property type="match status" value="1"/>
</dbReference>
<dbReference type="FunFam" id="3.30.160.270:FF:000003">
    <property type="entry name" value="2-isopropylmalate synthase"/>
    <property type="match status" value="1"/>
</dbReference>
<dbReference type="Gene3D" id="1.10.238.260">
    <property type="match status" value="1"/>
</dbReference>
<dbReference type="Gene3D" id="3.30.160.270">
    <property type="match status" value="1"/>
</dbReference>
<dbReference type="Gene3D" id="3.20.20.70">
    <property type="entry name" value="Aldolase class I"/>
    <property type="match status" value="1"/>
</dbReference>
<dbReference type="HAMAP" id="MF_01025">
    <property type="entry name" value="LeuA_type1"/>
    <property type="match status" value="1"/>
</dbReference>
<dbReference type="InterPro" id="IPR050073">
    <property type="entry name" value="2-IPM_HCS-like"/>
</dbReference>
<dbReference type="InterPro" id="IPR013709">
    <property type="entry name" value="2-isopropylmalate_synth_dimer"/>
</dbReference>
<dbReference type="InterPro" id="IPR002034">
    <property type="entry name" value="AIPM/Hcit_synth_CS"/>
</dbReference>
<dbReference type="InterPro" id="IPR013785">
    <property type="entry name" value="Aldolase_TIM"/>
</dbReference>
<dbReference type="InterPro" id="IPR054691">
    <property type="entry name" value="LeuA/HCS_post-cat"/>
</dbReference>
<dbReference type="InterPro" id="IPR036230">
    <property type="entry name" value="LeuA_allosteric_dom_sf"/>
</dbReference>
<dbReference type="InterPro" id="IPR005671">
    <property type="entry name" value="LeuA_bact_synth"/>
</dbReference>
<dbReference type="InterPro" id="IPR000891">
    <property type="entry name" value="PYR_CT"/>
</dbReference>
<dbReference type="NCBIfam" id="TIGR00973">
    <property type="entry name" value="leuA_bact"/>
    <property type="match status" value="1"/>
</dbReference>
<dbReference type="NCBIfam" id="NF002086">
    <property type="entry name" value="PRK00915.1-3"/>
    <property type="match status" value="1"/>
</dbReference>
<dbReference type="NCBIfam" id="NF002087">
    <property type="entry name" value="PRK00915.1-4"/>
    <property type="match status" value="1"/>
</dbReference>
<dbReference type="PANTHER" id="PTHR10277:SF9">
    <property type="entry name" value="2-ISOPROPYLMALATE SYNTHASE 1, CHLOROPLASTIC-RELATED"/>
    <property type="match status" value="1"/>
</dbReference>
<dbReference type="PANTHER" id="PTHR10277">
    <property type="entry name" value="HOMOCITRATE SYNTHASE-RELATED"/>
    <property type="match status" value="1"/>
</dbReference>
<dbReference type="Pfam" id="PF22617">
    <property type="entry name" value="HCS_D2"/>
    <property type="match status" value="1"/>
</dbReference>
<dbReference type="Pfam" id="PF00682">
    <property type="entry name" value="HMGL-like"/>
    <property type="match status" value="1"/>
</dbReference>
<dbReference type="Pfam" id="PF08502">
    <property type="entry name" value="LeuA_dimer"/>
    <property type="match status" value="1"/>
</dbReference>
<dbReference type="SMART" id="SM00917">
    <property type="entry name" value="LeuA_dimer"/>
    <property type="match status" value="1"/>
</dbReference>
<dbReference type="SUPFAM" id="SSF110921">
    <property type="entry name" value="2-isopropylmalate synthase LeuA, allosteric (dimerisation) domain"/>
    <property type="match status" value="1"/>
</dbReference>
<dbReference type="SUPFAM" id="SSF51569">
    <property type="entry name" value="Aldolase"/>
    <property type="match status" value="1"/>
</dbReference>
<dbReference type="PROSITE" id="PS00815">
    <property type="entry name" value="AIPM_HOMOCIT_SYNTH_1"/>
    <property type="match status" value="1"/>
</dbReference>
<dbReference type="PROSITE" id="PS00816">
    <property type="entry name" value="AIPM_HOMOCIT_SYNTH_2"/>
    <property type="match status" value="1"/>
</dbReference>
<dbReference type="PROSITE" id="PS50991">
    <property type="entry name" value="PYR_CT"/>
    <property type="match status" value="1"/>
</dbReference>
<accession>Q63VP3</accession>
<proteinExistence type="inferred from homology"/>
<sequence length="515" mass="55586">MTDKLIIFDTTLRDGEQSPGASMTKEEKIRIAKQLERMKVDVIEAGFAASSNGDFDAIQTIASQVKDSTICSLARANDKDIQRAADALKPANSFRIHTFIATSPLHMEKKLRMTPDQVFEQARLAVRFARKFTDNIEFSPEDGSRSDMDFLCRVLEAVIAEGATTINIADTVGYGVPELYGNLVKTLRERIPNSDKAIFSVHCHNDLGMAVANSLAGVKIGGARQVECTINGLGERAGNTSLEEIVMAVKTRKDYFGLDLGIDTTQIVPASKLVSQITGFVVQPNKAVVGANAFAHASGIHQDGVLKARDTYEIMRAEDVGWTANKIVLGKLSGRNAFKQRLQELGVSLDSEAELNAAFARFKDLADRKAEIFDEDIIAIVTEEESALAQEHEHYKFVSLAQRSETGERPQAKVVFAVDGDEVAGEASGNGPVDATFNAIETEVGSGAELLLYSVNAITTGTQAQGEVTVRLSKSGRIVNGVGTDPDIVAASAKAYIAALNKLYSNADKLNPQRA</sequence>
<comment type="function">
    <text evidence="1">Catalyzes the condensation of the acetyl group of acetyl-CoA with 3-methyl-2-oxobutanoate (2-ketoisovalerate) to form 3-carboxy-3-hydroxy-4-methylpentanoate (2-isopropylmalate).</text>
</comment>
<comment type="catalytic activity">
    <reaction evidence="1">
        <text>3-methyl-2-oxobutanoate + acetyl-CoA + H2O = (2S)-2-isopropylmalate + CoA + H(+)</text>
        <dbReference type="Rhea" id="RHEA:21524"/>
        <dbReference type="ChEBI" id="CHEBI:1178"/>
        <dbReference type="ChEBI" id="CHEBI:11851"/>
        <dbReference type="ChEBI" id="CHEBI:15377"/>
        <dbReference type="ChEBI" id="CHEBI:15378"/>
        <dbReference type="ChEBI" id="CHEBI:57287"/>
        <dbReference type="ChEBI" id="CHEBI:57288"/>
        <dbReference type="EC" id="2.3.3.13"/>
    </reaction>
</comment>
<comment type="cofactor">
    <cofactor evidence="1">
        <name>Mn(2+)</name>
        <dbReference type="ChEBI" id="CHEBI:29035"/>
    </cofactor>
</comment>
<comment type="pathway">
    <text evidence="1">Amino-acid biosynthesis; L-leucine biosynthesis; L-leucine from 3-methyl-2-oxobutanoate: step 1/4.</text>
</comment>
<comment type="subunit">
    <text evidence="1">Homodimer.</text>
</comment>
<comment type="subcellular location">
    <subcellularLocation>
        <location evidence="1">Cytoplasm</location>
    </subcellularLocation>
</comment>
<comment type="similarity">
    <text evidence="1">Belongs to the alpha-IPM synthase/homocitrate synthase family. LeuA type 1 subfamily.</text>
</comment>
<keyword id="KW-0028">Amino-acid biosynthesis</keyword>
<keyword id="KW-0100">Branched-chain amino acid biosynthesis</keyword>
<keyword id="KW-0963">Cytoplasm</keyword>
<keyword id="KW-0432">Leucine biosynthesis</keyword>
<keyword id="KW-0464">Manganese</keyword>
<keyword id="KW-0479">Metal-binding</keyword>
<keyword id="KW-1185">Reference proteome</keyword>
<keyword id="KW-0808">Transferase</keyword>
<gene>
    <name evidence="1" type="primary">leuA</name>
    <name type="ordered locus">BPSL1201</name>
</gene>